<organism>
    <name type="scientific">Vultur gryphus</name>
    <name type="common">Andean condor</name>
    <dbReference type="NCBI Taxonomy" id="8924"/>
    <lineage>
        <taxon>Eukaryota</taxon>
        <taxon>Metazoa</taxon>
        <taxon>Chordata</taxon>
        <taxon>Craniata</taxon>
        <taxon>Vertebrata</taxon>
        <taxon>Euteleostomi</taxon>
        <taxon>Archelosauria</taxon>
        <taxon>Archosauria</taxon>
        <taxon>Dinosauria</taxon>
        <taxon>Saurischia</taxon>
        <taxon>Theropoda</taxon>
        <taxon>Coelurosauria</taxon>
        <taxon>Aves</taxon>
        <taxon>Neognathae</taxon>
        <taxon>Neoaves</taxon>
        <taxon>Telluraves</taxon>
        <taxon>Accipitrimorphae</taxon>
        <taxon>Accipitriformes</taxon>
        <taxon>Cathartidae</taxon>
        <taxon>Vultur</taxon>
    </lineage>
</organism>
<evidence type="ECO:0000255" key="1">
    <source>
        <dbReference type="PROSITE-ProRule" id="PRU00159"/>
    </source>
</evidence>
<evidence type="ECO:0000255" key="2">
    <source>
        <dbReference type="PROSITE-ProRule" id="PRU10027"/>
    </source>
</evidence>
<protein>
    <recommendedName>
        <fullName>Serine/threonine-protein kinase mos</fullName>
        <ecNumber>2.7.11.1</ecNumber>
    </recommendedName>
    <alternativeName>
        <fullName>Oocyte maturation factor mos</fullName>
    </alternativeName>
</protein>
<gene>
    <name type="primary">MOS</name>
</gene>
<reference key="1">
    <citation type="journal article" date="2001" name="Proc. R. Soc. B">
        <title>Convergence and divergence in the evolution of aquatic birds.</title>
        <authorList>
            <person name="van Tuinen M."/>
            <person name="Butvill D.B."/>
            <person name="Kirsch J.A."/>
            <person name="Hedges S.B."/>
        </authorList>
    </citation>
    <scope>NUCLEOTIDE SEQUENCE [GENOMIC DNA]</scope>
</reference>
<feature type="chain" id="PRO_0000086357" description="Serine/threonine-protein kinase mos">
    <location>
        <begin position="1" status="less than"/>
        <end position="200" status="greater than"/>
    </location>
</feature>
<feature type="domain" description="Protein kinase" evidence="1">
    <location>
        <begin position="2"/>
        <end position="200" status="greater than"/>
    </location>
</feature>
<feature type="active site" description="Proton acceptor" evidence="1 2">
    <location>
        <position position="143"/>
    </location>
</feature>
<feature type="binding site" evidence="1">
    <location>
        <begin position="8"/>
        <end position="16"/>
    </location>
    <ligand>
        <name>ATP</name>
        <dbReference type="ChEBI" id="CHEBI:30616"/>
    </ligand>
</feature>
<feature type="binding site" evidence="1">
    <location>
        <position position="29"/>
    </location>
    <ligand>
        <name>ATP</name>
        <dbReference type="ChEBI" id="CHEBI:30616"/>
    </ligand>
</feature>
<feature type="non-terminal residue">
    <location>
        <position position="1"/>
    </location>
</feature>
<feature type="non-terminal residue">
    <location>
        <position position="200"/>
    </location>
</feature>
<proteinExistence type="inferred from homology"/>
<name>MOS_VULGR</name>
<comment type="catalytic activity">
    <reaction>
        <text>L-seryl-[protein] + ATP = O-phospho-L-seryl-[protein] + ADP + H(+)</text>
        <dbReference type="Rhea" id="RHEA:17989"/>
        <dbReference type="Rhea" id="RHEA-COMP:9863"/>
        <dbReference type="Rhea" id="RHEA-COMP:11604"/>
        <dbReference type="ChEBI" id="CHEBI:15378"/>
        <dbReference type="ChEBI" id="CHEBI:29999"/>
        <dbReference type="ChEBI" id="CHEBI:30616"/>
        <dbReference type="ChEBI" id="CHEBI:83421"/>
        <dbReference type="ChEBI" id="CHEBI:456216"/>
        <dbReference type="EC" id="2.7.11.1"/>
    </reaction>
</comment>
<comment type="catalytic activity">
    <reaction>
        <text>L-threonyl-[protein] + ATP = O-phospho-L-threonyl-[protein] + ADP + H(+)</text>
        <dbReference type="Rhea" id="RHEA:46608"/>
        <dbReference type="Rhea" id="RHEA-COMP:11060"/>
        <dbReference type="Rhea" id="RHEA-COMP:11605"/>
        <dbReference type="ChEBI" id="CHEBI:15378"/>
        <dbReference type="ChEBI" id="CHEBI:30013"/>
        <dbReference type="ChEBI" id="CHEBI:30616"/>
        <dbReference type="ChEBI" id="CHEBI:61977"/>
        <dbReference type="ChEBI" id="CHEBI:456216"/>
        <dbReference type="EC" id="2.7.11.1"/>
    </reaction>
</comment>
<comment type="similarity">
    <text evidence="1">Belongs to the protein kinase superfamily. Ser/Thr protein kinase family.</text>
</comment>
<accession>Q90XV7</accession>
<sequence length="200" mass="21625">QLCLLQPLGSGGFGSVYKATYHGATVAVKQVKKSSKNRLASRQSFWAELNVARLQHNNVVRVVAASTCAPASQNSLGTIIMEYVGNITLHHVIYGTGDAWRQGEDDEGGCGRKALSMEETVCYSCDIMTGLAFLHSQDIVHLDLKPANIFITEQGVCKIGDFGCSQKLEEGLSQSPHVCQQGGTYTHRAPELLKGERVTA</sequence>
<dbReference type="EC" id="2.7.11.1"/>
<dbReference type="EMBL" id="AF339329">
    <property type="protein sequence ID" value="AAL06305.1"/>
    <property type="molecule type" value="Genomic_DNA"/>
</dbReference>
<dbReference type="SMR" id="Q90XV7"/>
<dbReference type="GO" id="GO:0005524">
    <property type="term" value="F:ATP binding"/>
    <property type="evidence" value="ECO:0007669"/>
    <property type="project" value="UniProtKB-KW"/>
</dbReference>
<dbReference type="GO" id="GO:0106310">
    <property type="term" value="F:protein serine kinase activity"/>
    <property type="evidence" value="ECO:0007669"/>
    <property type="project" value="RHEA"/>
</dbReference>
<dbReference type="GO" id="GO:0004674">
    <property type="term" value="F:protein serine/threonine kinase activity"/>
    <property type="evidence" value="ECO:0007669"/>
    <property type="project" value="UniProtKB-KW"/>
</dbReference>
<dbReference type="FunFam" id="3.30.200.20:FF:000316">
    <property type="entry name" value="Proto-oncogene serine/threonine-protein kinase mos"/>
    <property type="match status" value="1"/>
</dbReference>
<dbReference type="Gene3D" id="3.30.200.20">
    <property type="entry name" value="Phosphorylase Kinase, domain 1"/>
    <property type="match status" value="1"/>
</dbReference>
<dbReference type="Gene3D" id="1.10.510.10">
    <property type="entry name" value="Transferase(Phosphotransferase) domain 1"/>
    <property type="match status" value="1"/>
</dbReference>
<dbReference type="InterPro" id="IPR011009">
    <property type="entry name" value="Kinase-like_dom_sf"/>
</dbReference>
<dbReference type="InterPro" id="IPR000719">
    <property type="entry name" value="Prot_kinase_dom"/>
</dbReference>
<dbReference type="InterPro" id="IPR017441">
    <property type="entry name" value="Protein_kinase_ATP_BS"/>
</dbReference>
<dbReference type="InterPro" id="IPR008271">
    <property type="entry name" value="Ser/Thr_kinase_AS"/>
</dbReference>
<dbReference type="InterPro" id="IPR051681">
    <property type="entry name" value="Ser/Thr_Kinases-Pseudokinases"/>
</dbReference>
<dbReference type="PANTHER" id="PTHR44329">
    <property type="entry name" value="SERINE/THREONINE-PROTEIN KINASE TNNI3K-RELATED"/>
    <property type="match status" value="1"/>
</dbReference>
<dbReference type="PANTHER" id="PTHR44329:SF285">
    <property type="entry name" value="V-MOS MOLONEY MURINE SARCOMA VIRAL ONCO HOMOLOG"/>
    <property type="match status" value="1"/>
</dbReference>
<dbReference type="Pfam" id="PF00069">
    <property type="entry name" value="Pkinase"/>
    <property type="match status" value="1"/>
</dbReference>
<dbReference type="SMART" id="SM00220">
    <property type="entry name" value="S_TKc"/>
    <property type="match status" value="1"/>
</dbReference>
<dbReference type="SUPFAM" id="SSF56112">
    <property type="entry name" value="Protein kinase-like (PK-like)"/>
    <property type="match status" value="1"/>
</dbReference>
<dbReference type="PROSITE" id="PS00107">
    <property type="entry name" value="PROTEIN_KINASE_ATP"/>
    <property type="match status" value="1"/>
</dbReference>
<dbReference type="PROSITE" id="PS50011">
    <property type="entry name" value="PROTEIN_KINASE_DOM"/>
    <property type="match status" value="1"/>
</dbReference>
<dbReference type="PROSITE" id="PS00108">
    <property type="entry name" value="PROTEIN_KINASE_ST"/>
    <property type="match status" value="1"/>
</dbReference>
<keyword id="KW-0067">ATP-binding</keyword>
<keyword id="KW-0418">Kinase</keyword>
<keyword id="KW-0547">Nucleotide-binding</keyword>
<keyword id="KW-0723">Serine/threonine-protein kinase</keyword>
<keyword id="KW-0808">Transferase</keyword>